<feature type="chain" id="PRO_0000167556" description="Ribosome-recycling factor">
    <location>
        <begin position="1"/>
        <end position="185"/>
    </location>
</feature>
<dbReference type="EMBL" id="CP000003">
    <property type="protein sequence ID" value="AAT86540.1"/>
    <property type="molecule type" value="Genomic_DNA"/>
</dbReference>
<dbReference type="RefSeq" id="WP_002985763.1">
    <property type="nucleotide sequence ID" value="NC_006086.1"/>
</dbReference>
<dbReference type="SMR" id="Q5XDH3"/>
<dbReference type="GeneID" id="69901299"/>
<dbReference type="KEGG" id="spa:M6_Spy0405"/>
<dbReference type="HOGENOM" id="CLU_073981_2_0_9"/>
<dbReference type="Proteomes" id="UP000001167">
    <property type="component" value="Chromosome"/>
</dbReference>
<dbReference type="GO" id="GO:0005737">
    <property type="term" value="C:cytoplasm"/>
    <property type="evidence" value="ECO:0007669"/>
    <property type="project" value="UniProtKB-SubCell"/>
</dbReference>
<dbReference type="GO" id="GO:0043023">
    <property type="term" value="F:ribosomal large subunit binding"/>
    <property type="evidence" value="ECO:0007669"/>
    <property type="project" value="TreeGrafter"/>
</dbReference>
<dbReference type="GO" id="GO:0006415">
    <property type="term" value="P:translational termination"/>
    <property type="evidence" value="ECO:0007669"/>
    <property type="project" value="UniProtKB-UniRule"/>
</dbReference>
<dbReference type="CDD" id="cd00520">
    <property type="entry name" value="RRF"/>
    <property type="match status" value="1"/>
</dbReference>
<dbReference type="FunFam" id="1.10.132.20:FF:000001">
    <property type="entry name" value="Ribosome-recycling factor"/>
    <property type="match status" value="1"/>
</dbReference>
<dbReference type="FunFam" id="3.30.1360.40:FF:000001">
    <property type="entry name" value="Ribosome-recycling factor"/>
    <property type="match status" value="1"/>
</dbReference>
<dbReference type="Gene3D" id="3.30.1360.40">
    <property type="match status" value="1"/>
</dbReference>
<dbReference type="Gene3D" id="1.10.132.20">
    <property type="entry name" value="Ribosome-recycling factor"/>
    <property type="match status" value="1"/>
</dbReference>
<dbReference type="HAMAP" id="MF_00040">
    <property type="entry name" value="RRF"/>
    <property type="match status" value="1"/>
</dbReference>
<dbReference type="InterPro" id="IPR002661">
    <property type="entry name" value="Ribosome_recyc_fac"/>
</dbReference>
<dbReference type="InterPro" id="IPR023584">
    <property type="entry name" value="Ribosome_recyc_fac_dom"/>
</dbReference>
<dbReference type="InterPro" id="IPR036191">
    <property type="entry name" value="RRF_sf"/>
</dbReference>
<dbReference type="NCBIfam" id="TIGR00496">
    <property type="entry name" value="frr"/>
    <property type="match status" value="1"/>
</dbReference>
<dbReference type="PANTHER" id="PTHR20982:SF3">
    <property type="entry name" value="MITOCHONDRIAL RIBOSOME RECYCLING FACTOR PSEUDO 1"/>
    <property type="match status" value="1"/>
</dbReference>
<dbReference type="PANTHER" id="PTHR20982">
    <property type="entry name" value="RIBOSOME RECYCLING FACTOR"/>
    <property type="match status" value="1"/>
</dbReference>
<dbReference type="Pfam" id="PF01765">
    <property type="entry name" value="RRF"/>
    <property type="match status" value="1"/>
</dbReference>
<dbReference type="SUPFAM" id="SSF55194">
    <property type="entry name" value="Ribosome recycling factor, RRF"/>
    <property type="match status" value="1"/>
</dbReference>
<reference key="1">
    <citation type="journal article" date="2004" name="J. Infect. Dis.">
        <title>Progress toward characterization of the group A Streptococcus metagenome: complete genome sequence of a macrolide-resistant serotype M6 strain.</title>
        <authorList>
            <person name="Banks D.J."/>
            <person name="Porcella S.F."/>
            <person name="Barbian K.D."/>
            <person name="Beres S.B."/>
            <person name="Philips L.E."/>
            <person name="Voyich J.M."/>
            <person name="DeLeo F.R."/>
            <person name="Martin J.M."/>
            <person name="Somerville G.A."/>
            <person name="Musser J.M."/>
        </authorList>
    </citation>
    <scope>NUCLEOTIDE SEQUENCE [LARGE SCALE GENOMIC DNA]</scope>
    <source>
        <strain>ATCC BAA-946 / MGAS10394</strain>
    </source>
</reference>
<reference key="2">
    <citation type="submission" date="2000-05" db="UniProtKB">
        <title>Two-dimensional gel electrophoresis map of Streptococcus pyogenes proteins.</title>
        <authorList>
            <person name="Hogan D.A."/>
            <person name="Du P."/>
            <person name="Stevenson T.I."/>
            <person name="Whitton M."/>
            <person name="Kilby G.W."/>
            <person name="Rogers J."/>
            <person name="VanBogelen R.A."/>
        </authorList>
    </citation>
    <scope>PROTEIN SEQUENCE OF 40-72; 81-111; 145-154 AND 163-185</scope>
    <scope>MASS SPECTROMETRY</scope>
    <source>
        <strain>JRS4 / Serotype M6</strain>
    </source>
</reference>
<organism>
    <name type="scientific">Streptococcus pyogenes serotype M6 (strain ATCC BAA-946 / MGAS10394)</name>
    <dbReference type="NCBI Taxonomy" id="286636"/>
    <lineage>
        <taxon>Bacteria</taxon>
        <taxon>Bacillati</taxon>
        <taxon>Bacillota</taxon>
        <taxon>Bacilli</taxon>
        <taxon>Lactobacillales</taxon>
        <taxon>Streptococcaceae</taxon>
        <taxon>Streptococcus</taxon>
    </lineage>
</organism>
<keyword id="KW-0963">Cytoplasm</keyword>
<keyword id="KW-0903">Direct protein sequencing</keyword>
<keyword id="KW-0648">Protein biosynthesis</keyword>
<protein>
    <recommendedName>
        <fullName evidence="1">Ribosome-recycling factor</fullName>
        <shortName evidence="1">RRF</shortName>
    </recommendedName>
    <alternativeName>
        <fullName evidence="1">Ribosome-releasing factor</fullName>
    </alternativeName>
</protein>
<sequence>MANAIIETAKERFAQSHQSLSREYASIRAGRANASLLDRIQVDYYGAPTPLNQLASITVPEARVLLISPFDKSSIKDIERALNASDLGITPANDGSVIRLVIPALTEETRKELAKEVKKVGENAKIAIRNIRRDAMDDAKKQEKAKEITEDELKTLEKDIQKATDDAIKEIDRMTAEKEKELLSV</sequence>
<proteinExistence type="evidence at protein level"/>
<gene>
    <name evidence="1" type="primary">frr</name>
    <name type="ordered locus">M6_Spy0405</name>
</gene>
<comment type="function">
    <text evidence="1">Responsible for the release of ribosomes from messenger RNA at the termination of protein biosynthesis. May increase the efficiency of translation by recycling ribosomes from one round of translation to another.</text>
</comment>
<comment type="subcellular location">
    <subcellularLocation>
        <location evidence="1">Cytoplasm</location>
    </subcellularLocation>
</comment>
<comment type="mass spectrometry"/>
<comment type="similarity">
    <text evidence="1">Belongs to the RRF family.</text>
</comment>
<accession>Q5XDH3</accession>
<accession>P82556</accession>
<evidence type="ECO:0000255" key="1">
    <source>
        <dbReference type="HAMAP-Rule" id="MF_00040"/>
    </source>
</evidence>
<evidence type="ECO:0000269" key="2">
    <source ref="2"/>
</evidence>
<name>RRF_STRP6</name>